<evidence type="ECO:0000250" key="1"/>
<evidence type="ECO:0000255" key="2"/>
<evidence type="ECO:0000305" key="3"/>
<proteinExistence type="inferred from homology"/>
<accession>Q752X9</accession>
<dbReference type="EC" id="2.5.1.21"/>
<dbReference type="EMBL" id="AE016819">
    <property type="protein sequence ID" value="AAS53815.1"/>
    <property type="molecule type" value="Genomic_DNA"/>
</dbReference>
<dbReference type="RefSeq" id="NP_985991.1">
    <property type="nucleotide sequence ID" value="NM_211346.1"/>
</dbReference>
<dbReference type="SMR" id="Q752X9"/>
<dbReference type="FunCoup" id="Q752X9">
    <property type="interactions" value="319"/>
</dbReference>
<dbReference type="STRING" id="284811.Q752X9"/>
<dbReference type="EnsemblFungi" id="AAS53815">
    <property type="protein sequence ID" value="AAS53815"/>
    <property type="gene ID" value="AGOS_AFR444C"/>
</dbReference>
<dbReference type="GeneID" id="4622268"/>
<dbReference type="KEGG" id="ago:AGOS_AFR444C"/>
<dbReference type="eggNOG" id="KOG1459">
    <property type="taxonomic scope" value="Eukaryota"/>
</dbReference>
<dbReference type="HOGENOM" id="CLU_031981_2_1_1"/>
<dbReference type="InParanoid" id="Q752X9"/>
<dbReference type="OMA" id="GEACQLM"/>
<dbReference type="OrthoDB" id="431150at2759"/>
<dbReference type="UniPathway" id="UPA00767">
    <property type="reaction ID" value="UER00751"/>
</dbReference>
<dbReference type="Proteomes" id="UP000000591">
    <property type="component" value="Chromosome VI"/>
</dbReference>
<dbReference type="GO" id="GO:0005789">
    <property type="term" value="C:endoplasmic reticulum membrane"/>
    <property type="evidence" value="ECO:0000318"/>
    <property type="project" value="GO_Central"/>
</dbReference>
<dbReference type="GO" id="GO:0051996">
    <property type="term" value="F:squalene synthase [NAD(P)H] activity"/>
    <property type="evidence" value="ECO:0000318"/>
    <property type="project" value="GO_Central"/>
</dbReference>
<dbReference type="GO" id="GO:0006696">
    <property type="term" value="P:ergosterol biosynthetic process"/>
    <property type="evidence" value="ECO:0000318"/>
    <property type="project" value="GO_Central"/>
</dbReference>
<dbReference type="GO" id="GO:0045338">
    <property type="term" value="P:farnesyl diphosphate metabolic process"/>
    <property type="evidence" value="ECO:0000318"/>
    <property type="project" value="GO_Central"/>
</dbReference>
<dbReference type="GO" id="GO:1902767">
    <property type="term" value="P:isoprenoid biosynthetic process via mevalonate"/>
    <property type="evidence" value="ECO:0007669"/>
    <property type="project" value="EnsemblFungi"/>
</dbReference>
<dbReference type="CDD" id="cd00683">
    <property type="entry name" value="Trans_IPPS_HH"/>
    <property type="match status" value="1"/>
</dbReference>
<dbReference type="FunFam" id="1.10.600.10:FF:000003">
    <property type="entry name" value="Farnesyl-diphosphate farnesyltransferase 1"/>
    <property type="match status" value="1"/>
</dbReference>
<dbReference type="Gene3D" id="1.10.600.10">
    <property type="entry name" value="Farnesyl Diphosphate Synthase"/>
    <property type="match status" value="1"/>
</dbReference>
<dbReference type="InterPro" id="IPR008949">
    <property type="entry name" value="Isoprenoid_synthase_dom_sf"/>
</dbReference>
<dbReference type="InterPro" id="IPR002060">
    <property type="entry name" value="Squ/phyt_synthse"/>
</dbReference>
<dbReference type="InterPro" id="IPR006449">
    <property type="entry name" value="Squal_synth-like"/>
</dbReference>
<dbReference type="InterPro" id="IPR019845">
    <property type="entry name" value="Squalene/phytoene_synthase_CS"/>
</dbReference>
<dbReference type="InterPro" id="IPR044844">
    <property type="entry name" value="Trans_IPPS_euk-type"/>
</dbReference>
<dbReference type="InterPro" id="IPR033904">
    <property type="entry name" value="Trans_IPPS_HH"/>
</dbReference>
<dbReference type="NCBIfam" id="TIGR01559">
    <property type="entry name" value="squal_synth"/>
    <property type="match status" value="1"/>
</dbReference>
<dbReference type="PANTHER" id="PTHR11626">
    <property type="entry name" value="FARNESYL-DIPHOSPHATE FARNESYLTRANSFERASE"/>
    <property type="match status" value="1"/>
</dbReference>
<dbReference type="PANTHER" id="PTHR11626:SF2">
    <property type="entry name" value="SQUALENE SYNTHASE"/>
    <property type="match status" value="1"/>
</dbReference>
<dbReference type="Pfam" id="PF00494">
    <property type="entry name" value="SQS_PSY"/>
    <property type="match status" value="1"/>
</dbReference>
<dbReference type="SFLD" id="SFLDS00005">
    <property type="entry name" value="Isoprenoid_Synthase_Type_I"/>
    <property type="match status" value="1"/>
</dbReference>
<dbReference type="SFLD" id="SFLDG01018">
    <property type="entry name" value="Squalene/Phytoene_Synthase_Lik"/>
    <property type="match status" value="1"/>
</dbReference>
<dbReference type="SUPFAM" id="SSF48576">
    <property type="entry name" value="Terpenoid synthases"/>
    <property type="match status" value="1"/>
</dbReference>
<dbReference type="PROSITE" id="PS01044">
    <property type="entry name" value="SQUALEN_PHYTOEN_SYN_1"/>
    <property type="match status" value="1"/>
</dbReference>
<dbReference type="PROSITE" id="PS01045">
    <property type="entry name" value="SQUALEN_PHYTOEN_SYN_2"/>
    <property type="match status" value="1"/>
</dbReference>
<feature type="chain" id="PRO_0000067446" description="Squalene synthase">
    <location>
        <begin position="1"/>
        <end position="441"/>
    </location>
</feature>
<feature type="transmembrane region" description="Helical" evidence="2">
    <location>
        <begin position="293"/>
        <end position="313"/>
    </location>
</feature>
<feature type="transmembrane region" description="Helical" evidence="2">
    <location>
        <begin position="420"/>
        <end position="440"/>
    </location>
</feature>
<protein>
    <recommendedName>
        <fullName>Squalene synthase</fullName>
        <shortName>SQS</shortName>
        <shortName>SS</shortName>
        <ecNumber>2.5.1.21</ecNumber>
    </recommendedName>
    <alternativeName>
        <fullName>FPP:FPP farnesyltransferase</fullName>
    </alternativeName>
    <alternativeName>
        <fullName>Farnesyl-diphosphate farnesyltransferase</fullName>
    </alternativeName>
</protein>
<sequence>MGKVVQLFTHPLELKAALKLKFLREPLYPADDTQGSAELKRCYQLLQRTSRSFAAVIMELHPELRNAVMLFYLILRALDTVEDDMTISPKVKVPLLREFDQKLKLDTWSFDGNAKTEKDRDVLVEFSTILAEFHKLKPEYQQVIADITHKMGNGMADYILDEKFNLSGLETIQDYDRYCHYVAGLVGDGLTHLIMLAKFSSPGLYYDSPDLYESMGLFLQKTNIIRDYAEDLADGRSFWPKEIWSHYADDLASFSKPENATAGVYCINHLVLNALGHVQHVLTYLASLREQSSFQFCAIPQVMAIATLALVFGNERVLQTSVKIRKGTTCYLILKSRTFQGCVEIFEHYLRDIRKRLTVADPNYLKLNIEIAKLDKFIEEMYQDKLPVGAKPQETEIYKKVRERSAYDLEVLPREQEEEFKFNVLLSILFTVFGALYWYAK</sequence>
<reference key="1">
    <citation type="journal article" date="2004" name="Science">
        <title>The Ashbya gossypii genome as a tool for mapping the ancient Saccharomyces cerevisiae genome.</title>
        <authorList>
            <person name="Dietrich F.S."/>
            <person name="Voegeli S."/>
            <person name="Brachat S."/>
            <person name="Lerch A."/>
            <person name="Gates K."/>
            <person name="Steiner S."/>
            <person name="Mohr C."/>
            <person name="Poehlmann R."/>
            <person name="Luedi P."/>
            <person name="Choi S."/>
            <person name="Wing R.A."/>
            <person name="Flavier A."/>
            <person name="Gaffney T.D."/>
            <person name="Philippsen P."/>
        </authorList>
    </citation>
    <scope>NUCLEOTIDE SEQUENCE [LARGE SCALE GENOMIC DNA]</scope>
    <source>
        <strain>ATCC 10895 / CBS 109.51 / FGSC 9923 / NRRL Y-1056</strain>
    </source>
</reference>
<reference key="2">
    <citation type="journal article" date="2013" name="G3 (Bethesda)">
        <title>Genomes of Ashbya fungi isolated from insects reveal four mating-type loci, numerous translocations, lack of transposons, and distinct gene duplications.</title>
        <authorList>
            <person name="Dietrich F.S."/>
            <person name="Voegeli S."/>
            <person name="Kuo S."/>
            <person name="Philippsen P."/>
        </authorList>
    </citation>
    <scope>GENOME REANNOTATION</scope>
    <source>
        <strain>ATCC 10895 / CBS 109.51 / FGSC 9923 / NRRL Y-1056</strain>
    </source>
</reference>
<gene>
    <name type="primary">ERG9</name>
    <name type="ordered locus">AFR444C</name>
</gene>
<comment type="function">
    <text evidence="1">Catalyzes the condensation of 2 two farnesyl pyrophosphate moieties to form squalene. It is the first committed enzyme of the sterol biosynthesis pathway. Required for the biosynthesis of ergosterol (By similarity).</text>
</comment>
<comment type="catalytic activity">
    <reaction>
        <text>2 (2E,6E)-farnesyl diphosphate + NADPH + H(+) = squalene + 2 diphosphate + NADP(+)</text>
        <dbReference type="Rhea" id="RHEA:32295"/>
        <dbReference type="ChEBI" id="CHEBI:15378"/>
        <dbReference type="ChEBI" id="CHEBI:15440"/>
        <dbReference type="ChEBI" id="CHEBI:33019"/>
        <dbReference type="ChEBI" id="CHEBI:57783"/>
        <dbReference type="ChEBI" id="CHEBI:58349"/>
        <dbReference type="ChEBI" id="CHEBI:175763"/>
        <dbReference type="EC" id="2.5.1.21"/>
    </reaction>
</comment>
<comment type="catalytic activity">
    <reaction>
        <text>2 (2E,6E)-farnesyl diphosphate + NADH + H(+) = squalene + 2 diphosphate + NAD(+)</text>
        <dbReference type="Rhea" id="RHEA:32299"/>
        <dbReference type="ChEBI" id="CHEBI:15378"/>
        <dbReference type="ChEBI" id="CHEBI:15440"/>
        <dbReference type="ChEBI" id="CHEBI:33019"/>
        <dbReference type="ChEBI" id="CHEBI:57540"/>
        <dbReference type="ChEBI" id="CHEBI:57945"/>
        <dbReference type="ChEBI" id="CHEBI:175763"/>
        <dbReference type="EC" id="2.5.1.21"/>
    </reaction>
</comment>
<comment type="cofactor">
    <cofactor evidence="1">
        <name>Mg(2+)</name>
        <dbReference type="ChEBI" id="CHEBI:18420"/>
    </cofactor>
</comment>
<comment type="pathway">
    <text>Terpene metabolism; lanosterol biosynthesis; lanosterol from farnesyl diphosphate: step 1/3.</text>
</comment>
<comment type="subcellular location">
    <subcellularLocation>
        <location evidence="1">Endoplasmic reticulum membrane</location>
        <topology evidence="1">Multi-pass membrane protein</topology>
    </subcellularLocation>
</comment>
<comment type="similarity">
    <text evidence="3">Belongs to the phytoene/squalene synthase family.</text>
</comment>
<keyword id="KW-0256">Endoplasmic reticulum</keyword>
<keyword id="KW-0414">Isoprene biosynthesis</keyword>
<keyword id="KW-0444">Lipid biosynthesis</keyword>
<keyword id="KW-0443">Lipid metabolism</keyword>
<keyword id="KW-0460">Magnesium</keyword>
<keyword id="KW-0472">Membrane</keyword>
<keyword id="KW-0511">Multifunctional enzyme</keyword>
<keyword id="KW-0521">NADP</keyword>
<keyword id="KW-1185">Reference proteome</keyword>
<keyword id="KW-0752">Steroid biosynthesis</keyword>
<keyword id="KW-0753">Steroid metabolism</keyword>
<keyword id="KW-0756">Sterol biosynthesis</keyword>
<keyword id="KW-1207">Sterol metabolism</keyword>
<keyword id="KW-0808">Transferase</keyword>
<keyword id="KW-0812">Transmembrane</keyword>
<keyword id="KW-1133">Transmembrane helix</keyword>
<name>FDFT_EREGS</name>
<organism>
    <name type="scientific">Eremothecium gossypii (strain ATCC 10895 / CBS 109.51 / FGSC 9923 / NRRL Y-1056)</name>
    <name type="common">Yeast</name>
    <name type="synonym">Ashbya gossypii</name>
    <dbReference type="NCBI Taxonomy" id="284811"/>
    <lineage>
        <taxon>Eukaryota</taxon>
        <taxon>Fungi</taxon>
        <taxon>Dikarya</taxon>
        <taxon>Ascomycota</taxon>
        <taxon>Saccharomycotina</taxon>
        <taxon>Saccharomycetes</taxon>
        <taxon>Saccharomycetales</taxon>
        <taxon>Saccharomycetaceae</taxon>
        <taxon>Eremothecium</taxon>
    </lineage>
</organism>